<reference key="1">
    <citation type="journal article" date="1997" name="Proc. Natl. Acad. Sci. U.S.A.">
        <title>Cloning of murine RNA polymerase I-specific TAF factors: conserved interactions between the subunits of the species-specific transcription initiation factor TIF-IB/SL1.</title>
        <authorList>
            <person name="Heix J."/>
            <person name="Zomerdijk J.C.B.M."/>
            <person name="Ravanpay A."/>
            <person name="Tjian R."/>
            <person name="Grummt I."/>
        </authorList>
    </citation>
    <scope>NUCLEOTIDE SEQUENCE [GENOMIC DNA]</scope>
    <scope>FUNCTION</scope>
    <scope>INTERACTION WITH TBP; TAF1A AND TAF1C</scope>
</reference>
<reference key="2">
    <citation type="journal article" date="2005" name="Science">
        <title>The transcriptional landscape of the mammalian genome.</title>
        <authorList>
            <person name="Carninci P."/>
            <person name="Kasukawa T."/>
            <person name="Katayama S."/>
            <person name="Gough J."/>
            <person name="Frith M.C."/>
            <person name="Maeda N."/>
            <person name="Oyama R."/>
            <person name="Ravasi T."/>
            <person name="Lenhard B."/>
            <person name="Wells C."/>
            <person name="Kodzius R."/>
            <person name="Shimokawa K."/>
            <person name="Bajic V.B."/>
            <person name="Brenner S.E."/>
            <person name="Batalov S."/>
            <person name="Forrest A.R."/>
            <person name="Zavolan M."/>
            <person name="Davis M.J."/>
            <person name="Wilming L.G."/>
            <person name="Aidinis V."/>
            <person name="Allen J.E."/>
            <person name="Ambesi-Impiombato A."/>
            <person name="Apweiler R."/>
            <person name="Aturaliya R.N."/>
            <person name="Bailey T.L."/>
            <person name="Bansal M."/>
            <person name="Baxter L."/>
            <person name="Beisel K.W."/>
            <person name="Bersano T."/>
            <person name="Bono H."/>
            <person name="Chalk A.M."/>
            <person name="Chiu K.P."/>
            <person name="Choudhary V."/>
            <person name="Christoffels A."/>
            <person name="Clutterbuck D.R."/>
            <person name="Crowe M.L."/>
            <person name="Dalla E."/>
            <person name="Dalrymple B.P."/>
            <person name="de Bono B."/>
            <person name="Della Gatta G."/>
            <person name="di Bernardo D."/>
            <person name="Down T."/>
            <person name="Engstrom P."/>
            <person name="Fagiolini M."/>
            <person name="Faulkner G."/>
            <person name="Fletcher C.F."/>
            <person name="Fukushima T."/>
            <person name="Furuno M."/>
            <person name="Futaki S."/>
            <person name="Gariboldi M."/>
            <person name="Georgii-Hemming P."/>
            <person name="Gingeras T.R."/>
            <person name="Gojobori T."/>
            <person name="Green R.E."/>
            <person name="Gustincich S."/>
            <person name="Harbers M."/>
            <person name="Hayashi Y."/>
            <person name="Hensch T.K."/>
            <person name="Hirokawa N."/>
            <person name="Hill D."/>
            <person name="Huminiecki L."/>
            <person name="Iacono M."/>
            <person name="Ikeo K."/>
            <person name="Iwama A."/>
            <person name="Ishikawa T."/>
            <person name="Jakt M."/>
            <person name="Kanapin A."/>
            <person name="Katoh M."/>
            <person name="Kawasawa Y."/>
            <person name="Kelso J."/>
            <person name="Kitamura H."/>
            <person name="Kitano H."/>
            <person name="Kollias G."/>
            <person name="Krishnan S.P."/>
            <person name="Kruger A."/>
            <person name="Kummerfeld S.K."/>
            <person name="Kurochkin I.V."/>
            <person name="Lareau L.F."/>
            <person name="Lazarevic D."/>
            <person name="Lipovich L."/>
            <person name="Liu J."/>
            <person name="Liuni S."/>
            <person name="McWilliam S."/>
            <person name="Madan Babu M."/>
            <person name="Madera M."/>
            <person name="Marchionni L."/>
            <person name="Matsuda H."/>
            <person name="Matsuzawa S."/>
            <person name="Miki H."/>
            <person name="Mignone F."/>
            <person name="Miyake S."/>
            <person name="Morris K."/>
            <person name="Mottagui-Tabar S."/>
            <person name="Mulder N."/>
            <person name="Nakano N."/>
            <person name="Nakauchi H."/>
            <person name="Ng P."/>
            <person name="Nilsson R."/>
            <person name="Nishiguchi S."/>
            <person name="Nishikawa S."/>
            <person name="Nori F."/>
            <person name="Ohara O."/>
            <person name="Okazaki Y."/>
            <person name="Orlando V."/>
            <person name="Pang K.C."/>
            <person name="Pavan W.J."/>
            <person name="Pavesi G."/>
            <person name="Pesole G."/>
            <person name="Petrovsky N."/>
            <person name="Piazza S."/>
            <person name="Reed J."/>
            <person name="Reid J.F."/>
            <person name="Ring B.Z."/>
            <person name="Ringwald M."/>
            <person name="Rost B."/>
            <person name="Ruan Y."/>
            <person name="Salzberg S.L."/>
            <person name="Sandelin A."/>
            <person name="Schneider C."/>
            <person name="Schoenbach C."/>
            <person name="Sekiguchi K."/>
            <person name="Semple C.A."/>
            <person name="Seno S."/>
            <person name="Sessa L."/>
            <person name="Sheng Y."/>
            <person name="Shibata Y."/>
            <person name="Shimada H."/>
            <person name="Shimada K."/>
            <person name="Silva D."/>
            <person name="Sinclair B."/>
            <person name="Sperling S."/>
            <person name="Stupka E."/>
            <person name="Sugiura K."/>
            <person name="Sultana R."/>
            <person name="Takenaka Y."/>
            <person name="Taki K."/>
            <person name="Tammoja K."/>
            <person name="Tan S.L."/>
            <person name="Tang S."/>
            <person name="Taylor M.S."/>
            <person name="Tegner J."/>
            <person name="Teichmann S.A."/>
            <person name="Ueda H.R."/>
            <person name="van Nimwegen E."/>
            <person name="Verardo R."/>
            <person name="Wei C.L."/>
            <person name="Yagi K."/>
            <person name="Yamanishi H."/>
            <person name="Zabarovsky E."/>
            <person name="Zhu S."/>
            <person name="Zimmer A."/>
            <person name="Hide W."/>
            <person name="Bult C."/>
            <person name="Grimmond S.M."/>
            <person name="Teasdale R.D."/>
            <person name="Liu E.T."/>
            <person name="Brusic V."/>
            <person name="Quackenbush J."/>
            <person name="Wahlestedt C."/>
            <person name="Mattick J.S."/>
            <person name="Hume D.A."/>
            <person name="Kai C."/>
            <person name="Sasaki D."/>
            <person name="Tomaru Y."/>
            <person name="Fukuda S."/>
            <person name="Kanamori-Katayama M."/>
            <person name="Suzuki M."/>
            <person name="Aoki J."/>
            <person name="Arakawa T."/>
            <person name="Iida J."/>
            <person name="Imamura K."/>
            <person name="Itoh M."/>
            <person name="Kato T."/>
            <person name="Kawaji H."/>
            <person name="Kawagashira N."/>
            <person name="Kawashima T."/>
            <person name="Kojima M."/>
            <person name="Kondo S."/>
            <person name="Konno H."/>
            <person name="Nakano K."/>
            <person name="Ninomiya N."/>
            <person name="Nishio T."/>
            <person name="Okada M."/>
            <person name="Plessy C."/>
            <person name="Shibata K."/>
            <person name="Shiraki T."/>
            <person name="Suzuki S."/>
            <person name="Tagami M."/>
            <person name="Waki K."/>
            <person name="Watahiki A."/>
            <person name="Okamura-Oho Y."/>
            <person name="Suzuki H."/>
            <person name="Kawai J."/>
            <person name="Hayashizaki Y."/>
        </authorList>
    </citation>
    <scope>NUCLEOTIDE SEQUENCE [LARGE SCALE MRNA] (ISOFORM 1)</scope>
    <source>
        <strain>C3H/HeJ</strain>
        <strain>C57BL/6J</strain>
        <strain>NOD</strain>
        <tissue>Brain</tissue>
        <tissue>Dendritic cell</tissue>
        <tissue>Embryonic stem cell</tissue>
    </source>
</reference>
<reference key="3">
    <citation type="journal article" date="2009" name="PLoS Biol.">
        <title>Lineage-specific biology revealed by a finished genome assembly of the mouse.</title>
        <authorList>
            <person name="Church D.M."/>
            <person name="Goodstadt L."/>
            <person name="Hillier L.W."/>
            <person name="Zody M.C."/>
            <person name="Goldstein S."/>
            <person name="She X."/>
            <person name="Bult C.J."/>
            <person name="Agarwala R."/>
            <person name="Cherry J.L."/>
            <person name="DiCuccio M."/>
            <person name="Hlavina W."/>
            <person name="Kapustin Y."/>
            <person name="Meric P."/>
            <person name="Maglott D."/>
            <person name="Birtle Z."/>
            <person name="Marques A.C."/>
            <person name="Graves T."/>
            <person name="Zhou S."/>
            <person name="Teague B."/>
            <person name="Potamousis K."/>
            <person name="Churas C."/>
            <person name="Place M."/>
            <person name="Herschleb J."/>
            <person name="Runnheim R."/>
            <person name="Forrest D."/>
            <person name="Amos-Landgraf J."/>
            <person name="Schwartz D.C."/>
            <person name="Cheng Z."/>
            <person name="Lindblad-Toh K."/>
            <person name="Eichler E.E."/>
            <person name="Ponting C.P."/>
        </authorList>
    </citation>
    <scope>NUCLEOTIDE SEQUENCE [LARGE SCALE GENOMIC DNA]</scope>
    <source>
        <strain>C57BL/6J</strain>
    </source>
</reference>
<reference key="4">
    <citation type="journal article" date="2004" name="Genome Res.">
        <title>The status, quality, and expansion of the NIH full-length cDNA project: the Mammalian Gene Collection (MGC).</title>
        <authorList>
            <consortium name="The MGC Project Team"/>
        </authorList>
    </citation>
    <scope>NUCLEOTIDE SEQUENCE [LARGE SCALE MRNA] (ISOFORMS 1 AND 2)</scope>
    <source>
        <strain>FVB/N</strain>
        <tissue>Mammary tumor</tissue>
    </source>
</reference>
<reference key="5">
    <citation type="journal article" date="2002" name="J. Biol. Chem.">
        <title>Rrn3 phosphorylation is a regulatory checkpoint for ribosome biogenesis.</title>
        <authorList>
            <person name="Cavanaugh A.H."/>
            <person name="Hirschler-Laszkiewicz I."/>
            <person name="Hu Q."/>
            <person name="Dundr M."/>
            <person name="Smink T."/>
            <person name="Misteli T."/>
            <person name="Rothblum L.I."/>
        </authorList>
    </citation>
    <scope>INTERACTION WITH RRN3</scope>
</reference>
<reference key="6">
    <citation type="journal article" date="2011" name="Biosci. Biotechnol. Biochem.">
        <title>Identification of novel nuclear protein interactions with the N-terminal part of filamin A.</title>
        <authorList>
            <person name="Qiu H."/>
            <person name="Nomiyama R."/>
            <person name="Moriguchi K."/>
            <person name="Fukada T."/>
            <person name="Sugimoto K."/>
        </authorList>
    </citation>
    <scope>INTERACTION WITH FLNA</scope>
</reference>
<comment type="function">
    <text evidence="5">Component of RNA polymerase I core factor complex that acts as a GTF2B/TFIIB-like factor and plays a key role in multiple steps during transcription initiation such as pre-initiation complex (PIC) assembly and postpolymerase recruitment events in polymerase I (Pol I) transcription. Binds rDNA promoters and plays a role in Pol I recruitment as a component of the SL1/TIF-IB complex and, possibly, directly through its interaction with RRN3.</text>
</comment>
<comment type="subunit">
    <text evidence="2 3 4 5">Component of the transcription factor SL1/TIF-IB complex, composed of TBP and at least TAF1A, TAF1B, TAF1C and TAF1D. In the complex interacts directly with TBP, TAF1A and TAF1C. Interaction of the SL1/TIF-IB subunits with TBP excludes interaction of TBP with the transcription factor IID (TFIID) subunits. Interacts with TBP and RRN3. Interacts with FLNA (via N-terminus). Part of Pol I pre-initiation complex (PIC), in which Pol I core assembles with RRN3 and promoter-bound UTBF and SL1/TIF-IB complex.</text>
</comment>
<comment type="subcellular location">
    <subcellularLocation>
        <location evidence="2">Nucleus</location>
        <location evidence="2">Nucleolus</location>
    </subcellularLocation>
</comment>
<comment type="alternative products">
    <event type="alternative splicing"/>
    <isoform>
        <id>P97358-1</id>
        <name>1</name>
        <sequence type="displayed"/>
    </isoform>
    <isoform>
        <id>P97358-2</id>
        <name>2</name>
        <sequence type="described" ref="VSP_028024 VSP_028025"/>
    </isoform>
</comment>
<comment type="domain">
    <text evidence="1">Although it shares weak sequence similarity with GTF2B/TFIIB, displays a similar subdomain organization as GTF2B/TFIIB, with a N-terminal zinc finger, a connecting region (composed of B-reader and B-linker regions), followed by 2 cyclin folds. The RRN7-type zinc finger plays an essential postrecruitment role in Pol I transcription at a step preceding synthesis of the first 40 nucleotides (By similarity).</text>
</comment>
<comment type="similarity">
    <text evidence="7">Belongs to the RRN7/TAF1B family.</text>
</comment>
<gene>
    <name type="primary">Taf1b</name>
</gene>
<proteinExistence type="evidence at protein level"/>
<name>TAF1B_MOUSE</name>
<keyword id="KW-0007">Acetylation</keyword>
<keyword id="KW-0025">Alternative splicing</keyword>
<keyword id="KW-0238">DNA-binding</keyword>
<keyword id="KW-0479">Metal-binding</keyword>
<keyword id="KW-0539">Nucleus</keyword>
<keyword id="KW-1185">Reference proteome</keyword>
<keyword id="KW-0804">Transcription</keyword>
<keyword id="KW-0805">Transcription regulation</keyword>
<keyword id="KW-0862">Zinc</keyword>
<keyword id="KW-0863">Zinc-finger</keyword>
<protein>
    <recommendedName>
        <fullName>TATA box-binding protein-associated factor RNA polymerase I subunit B</fullName>
    </recommendedName>
    <alternativeName>
        <fullName>RNA polymerase I-specific TBP-associated factor 68 kDa</fullName>
        <shortName>TAFI68</shortName>
    </alternativeName>
    <alternativeName>
        <fullName>TATA box-binding protein-associated factor 1B</fullName>
        <shortName>TBP-associated factor 1B</shortName>
    </alternativeName>
    <alternativeName>
        <fullName>Transcription initiation factor SL1/TIF-IB subunit B</fullName>
    </alternativeName>
</protein>
<sequence length="586" mass="67954">MDVEEVKAFRDRCSQCAAVSWGLTDEGKYYCTSCHNVTDRSEEVVSAADIPNTKINSINRGLRQRSKHEKGWDWYVCEGFQCILYHQAKALETLGVSPELKNEVLHNFWKRYLQKSKQAYCKNPVRTSGRKAKVLEDSVQSSDLGSDLELLSDTTCPLESEAEFQSDPQIPKPFPVTKGSPKSASVCSGSVDGVEYSERKEKGLVKMTVPRTLALCSLSLLWQRETITVSDLLRFVEEDHIPYINAFKLFPEEMKVYGRDKGIFAIESWPDYEDIYKNMIELAIFLDLPRFPDITEDCYLHPNTLCMKYLLEVNLPDEMHTLTCQVVKLTGIGEVDFLTFDPIAKTKRTVKYDVQAMAVIVVVLKLLFLLDDKLEWSYSDLAEAYNEQHREDTPQFDFRKWYQVMKKTFDEKRRKWEEARARYAWKTKRPLYRSHIDKSVAYKRRKMVENLQKQFSALVGSSPVVEKQAPSSFQFNWTEEGTDSPCFHGHSLQGLLIMKGQSMITKNSLYWLSTQKFCKSYCKHVTTYEESNFSLSYQFILNIFSFLLRIKTSALHEEVSLLEKKLFEKKYNESKKSSGSKKGRRH</sequence>
<feature type="chain" id="PRO_0000304406" description="TATA box-binding protein-associated factor RNA polymerase I subunit B">
    <location>
        <begin position="1"/>
        <end position="586"/>
    </location>
</feature>
<feature type="zinc finger region" description="RRN7-type">
    <location>
        <begin position="5"/>
        <end position="39"/>
    </location>
</feature>
<feature type="region of interest" description="B-reader" evidence="1">
    <location>
        <begin position="40"/>
        <end position="68"/>
    </location>
</feature>
<feature type="region of interest" description="B-linker" evidence="1">
    <location>
        <begin position="69"/>
        <end position="73"/>
    </location>
</feature>
<feature type="region of interest" description="N-terminal cyclin fold" evidence="1">
    <location>
        <begin position="74"/>
        <end position="259"/>
    </location>
</feature>
<feature type="region of interest" description="C-terminal cyclin fold" evidence="1">
    <location>
        <begin position="260"/>
        <end position="370"/>
    </location>
</feature>
<feature type="binding site" evidence="1">
    <location>
        <position position="13"/>
    </location>
    <ligand>
        <name>Zn(2+)</name>
        <dbReference type="ChEBI" id="CHEBI:29105"/>
    </ligand>
</feature>
<feature type="binding site" evidence="1">
    <location>
        <position position="16"/>
    </location>
    <ligand>
        <name>Zn(2+)</name>
        <dbReference type="ChEBI" id="CHEBI:29105"/>
    </ligand>
</feature>
<feature type="binding site" evidence="1">
    <location>
        <position position="31"/>
    </location>
    <ligand>
        <name>Zn(2+)</name>
        <dbReference type="ChEBI" id="CHEBI:29105"/>
    </ligand>
</feature>
<feature type="binding site" evidence="1">
    <location>
        <position position="34"/>
    </location>
    <ligand>
        <name>Zn(2+)</name>
        <dbReference type="ChEBI" id="CHEBI:29105"/>
    </ligand>
</feature>
<feature type="modified residue" description="N-acetylmethionine" evidence="2">
    <location>
        <position position="1"/>
    </location>
</feature>
<feature type="modified residue" description="N6-acetyllysine" evidence="2">
    <location>
        <position position="438"/>
    </location>
</feature>
<feature type="splice variant" id="VSP_028024" description="In isoform 2." evidence="6">
    <location>
        <begin position="1"/>
        <end position="100"/>
    </location>
</feature>
<feature type="splice variant" id="VSP_028025" description="In isoform 2." evidence="6">
    <original>K</original>
    <variation>M</variation>
    <location>
        <position position="101"/>
    </location>
</feature>
<feature type="sequence conflict" description="In Ref. 1; CAA71092, 2; BAE38271/BAE41709 and 4; AAH57167/AAI25028/AAI25029." evidence="7" ref="1 2 4">
    <original>D</original>
    <variation>N</variation>
    <location>
        <position position="2"/>
    </location>
</feature>
<feature type="sequence conflict" description="In Ref. 4; AAI25029." evidence="7" ref="4">
    <original>K</original>
    <variation>T</variation>
    <location>
        <position position="178"/>
    </location>
</feature>
<feature type="sequence conflict" description="In Ref. 2; BAE20906." evidence="7" ref="2">
    <original>D</original>
    <variation>G</variation>
    <location>
        <position position="287"/>
    </location>
</feature>
<dbReference type="EMBL" id="Y09973">
    <property type="protein sequence ID" value="CAA71092.1"/>
    <property type="molecule type" value="Genomic_DNA"/>
</dbReference>
<dbReference type="EMBL" id="AK131963">
    <property type="protein sequence ID" value="BAE20906.1"/>
    <property type="molecule type" value="mRNA"/>
</dbReference>
<dbReference type="EMBL" id="AK165580">
    <property type="protein sequence ID" value="BAE38271.1"/>
    <property type="molecule type" value="mRNA"/>
</dbReference>
<dbReference type="EMBL" id="AK170313">
    <property type="protein sequence ID" value="BAE41709.1"/>
    <property type="molecule type" value="mRNA"/>
</dbReference>
<dbReference type="EMBL" id="AC125067">
    <property type="status" value="NOT_ANNOTATED_CDS"/>
    <property type="molecule type" value="Genomic_DNA"/>
</dbReference>
<dbReference type="EMBL" id="AC132587">
    <property type="status" value="NOT_ANNOTATED_CDS"/>
    <property type="molecule type" value="Genomic_DNA"/>
</dbReference>
<dbReference type="EMBL" id="BC057167">
    <property type="protein sequence ID" value="AAH57167.1"/>
    <property type="molecule type" value="mRNA"/>
</dbReference>
<dbReference type="EMBL" id="BC069907">
    <property type="protein sequence ID" value="AAH69907.1"/>
    <property type="molecule type" value="mRNA"/>
</dbReference>
<dbReference type="EMBL" id="BC094035">
    <property type="protein sequence ID" value="AAH94035.1"/>
    <property type="molecule type" value="mRNA"/>
</dbReference>
<dbReference type="EMBL" id="BC125027">
    <property type="protein sequence ID" value="AAI25028.1"/>
    <property type="molecule type" value="mRNA"/>
</dbReference>
<dbReference type="EMBL" id="BC125028">
    <property type="protein sequence ID" value="AAI25029.1"/>
    <property type="molecule type" value="mRNA"/>
</dbReference>
<dbReference type="CCDS" id="CCDS36419.1">
    <molecule id="P97358-1"/>
</dbReference>
<dbReference type="RefSeq" id="NP_065639.2">
    <molecule id="P97358-1"/>
    <property type="nucleotide sequence ID" value="NM_020614.2"/>
</dbReference>
<dbReference type="BioGRID" id="203957">
    <property type="interactions" value="13"/>
</dbReference>
<dbReference type="CORUM" id="P97358"/>
<dbReference type="FunCoup" id="P97358">
    <property type="interactions" value="2461"/>
</dbReference>
<dbReference type="IntAct" id="P97358">
    <property type="interactions" value="3"/>
</dbReference>
<dbReference type="MINT" id="P97358"/>
<dbReference type="STRING" id="10090.ENSMUSP00000075339"/>
<dbReference type="iPTMnet" id="P97358"/>
<dbReference type="PhosphoSitePlus" id="P97358"/>
<dbReference type="PaxDb" id="10090-ENSMUSP00000075339"/>
<dbReference type="PeptideAtlas" id="P97358"/>
<dbReference type="ProteomicsDB" id="263063">
    <molecule id="P97358-1"/>
</dbReference>
<dbReference type="ProteomicsDB" id="263064">
    <molecule id="P97358-2"/>
</dbReference>
<dbReference type="Pumba" id="P97358"/>
<dbReference type="Antibodypedia" id="26617">
    <property type="antibodies" value="150 antibodies from 21 providers"/>
</dbReference>
<dbReference type="DNASU" id="21340"/>
<dbReference type="Ensembl" id="ENSMUST00000075954.9">
    <molecule id="P97358-1"/>
    <property type="protein sequence ID" value="ENSMUSP00000075339.8"/>
    <property type="gene ID" value="ENSMUSG00000059669.9"/>
</dbReference>
<dbReference type="GeneID" id="21340"/>
<dbReference type="KEGG" id="mmu:21340"/>
<dbReference type="UCSC" id="uc007nej.2">
    <molecule id="P97358-1"/>
    <property type="organism name" value="mouse"/>
</dbReference>
<dbReference type="UCSC" id="uc007nel.2">
    <molecule id="P97358-2"/>
    <property type="organism name" value="mouse"/>
</dbReference>
<dbReference type="AGR" id="MGI:109577"/>
<dbReference type="CTD" id="9014"/>
<dbReference type="MGI" id="MGI:109577">
    <property type="gene designation" value="Taf1b"/>
</dbReference>
<dbReference type="VEuPathDB" id="HostDB:ENSMUSG00000059669"/>
<dbReference type="eggNOG" id="ENOG502QVGU">
    <property type="taxonomic scope" value="Eukaryota"/>
</dbReference>
<dbReference type="GeneTree" id="ENSGT00440000033827"/>
<dbReference type="HOGENOM" id="CLU_032815_0_0_1"/>
<dbReference type="InParanoid" id="P97358"/>
<dbReference type="OMA" id="SFRFCWG"/>
<dbReference type="OrthoDB" id="10069252at2759"/>
<dbReference type="PhylomeDB" id="P97358"/>
<dbReference type="TreeFam" id="TF324353"/>
<dbReference type="Reactome" id="R-MMU-5250924">
    <property type="pathway name" value="B-WICH complex positively regulates rRNA expression"/>
</dbReference>
<dbReference type="Reactome" id="R-MMU-73762">
    <property type="pathway name" value="RNA Polymerase I Transcription Initiation"/>
</dbReference>
<dbReference type="Reactome" id="R-MMU-73772">
    <property type="pathway name" value="RNA Polymerase I Promoter Escape"/>
</dbReference>
<dbReference type="Reactome" id="R-MMU-73863">
    <property type="pathway name" value="RNA Polymerase I Transcription Termination"/>
</dbReference>
<dbReference type="BioGRID-ORCS" id="21340">
    <property type="hits" value="24 hits in 81 CRISPR screens"/>
</dbReference>
<dbReference type="ChiTaRS" id="Taf1b">
    <property type="organism name" value="mouse"/>
</dbReference>
<dbReference type="PRO" id="PR:P97358"/>
<dbReference type="Proteomes" id="UP000000589">
    <property type="component" value="Chromosome 12"/>
</dbReference>
<dbReference type="RNAct" id="P97358">
    <property type="molecule type" value="protein"/>
</dbReference>
<dbReference type="Bgee" id="ENSMUSG00000059669">
    <property type="expression patterns" value="Expressed in spermatocyte and 244 other cell types or tissues"/>
</dbReference>
<dbReference type="ExpressionAtlas" id="P97358">
    <property type="expression patterns" value="baseline and differential"/>
</dbReference>
<dbReference type="GO" id="GO:0005654">
    <property type="term" value="C:nucleoplasm"/>
    <property type="evidence" value="ECO:0000304"/>
    <property type="project" value="Reactome"/>
</dbReference>
<dbReference type="GO" id="GO:0070860">
    <property type="term" value="C:RNA polymerase I core factor complex"/>
    <property type="evidence" value="ECO:0007669"/>
    <property type="project" value="Ensembl"/>
</dbReference>
<dbReference type="GO" id="GO:0000120">
    <property type="term" value="C:RNA polymerase I transcription regulator complex"/>
    <property type="evidence" value="ECO:0000304"/>
    <property type="project" value="MGI"/>
</dbReference>
<dbReference type="GO" id="GO:0005668">
    <property type="term" value="C:RNA polymerase transcription factor SL1 complex"/>
    <property type="evidence" value="ECO:0007669"/>
    <property type="project" value="Ensembl"/>
</dbReference>
<dbReference type="GO" id="GO:0001164">
    <property type="term" value="F:RNA polymerase I core promoter sequence-specific DNA binding"/>
    <property type="evidence" value="ECO:0000250"/>
    <property type="project" value="UniProtKB"/>
</dbReference>
<dbReference type="GO" id="GO:0008270">
    <property type="term" value="F:zinc ion binding"/>
    <property type="evidence" value="ECO:0007669"/>
    <property type="project" value="UniProtKB-KW"/>
</dbReference>
<dbReference type="GO" id="GO:0001188">
    <property type="term" value="P:RNA polymerase I preinitiation complex assembly"/>
    <property type="evidence" value="ECO:0000250"/>
    <property type="project" value="UniProtKB"/>
</dbReference>
<dbReference type="GO" id="GO:0006360">
    <property type="term" value="P:transcription by RNA polymerase I"/>
    <property type="evidence" value="ECO:0000304"/>
    <property type="project" value="MGI"/>
</dbReference>
<dbReference type="InterPro" id="IPR048538">
    <property type="entry name" value="Rrn7_cyclin_C"/>
</dbReference>
<dbReference type="InterPro" id="IPR048540">
    <property type="entry name" value="Rrn7_cyclin_N"/>
</dbReference>
<dbReference type="InterPro" id="IPR033599">
    <property type="entry name" value="TAF1B/Rrn7"/>
</dbReference>
<dbReference type="InterPro" id="IPR021752">
    <property type="entry name" value="TF_Rrn7_Zf"/>
</dbReference>
<dbReference type="PANTHER" id="PTHR31576">
    <property type="entry name" value="TATA BOX-BINDING PROTEIN-ASSOCIATED FACTOR RNA POLYMERASE I SUBUNIT B"/>
    <property type="match status" value="1"/>
</dbReference>
<dbReference type="PANTHER" id="PTHR31576:SF2">
    <property type="entry name" value="TATA BOX-BINDING PROTEIN-ASSOCIATED FACTOR RNA POLYMERASE I SUBUNIT B"/>
    <property type="match status" value="1"/>
</dbReference>
<dbReference type="Pfam" id="PF20645">
    <property type="entry name" value="Rrn7_cyclin_C"/>
    <property type="match status" value="1"/>
</dbReference>
<dbReference type="Pfam" id="PF20644">
    <property type="entry name" value="Rrn7_cyclin_N"/>
    <property type="match status" value="1"/>
</dbReference>
<dbReference type="Pfam" id="PF11781">
    <property type="entry name" value="Zn_ribbon_RRN7"/>
    <property type="match status" value="1"/>
</dbReference>
<evidence type="ECO:0000250" key="1"/>
<evidence type="ECO:0000250" key="2">
    <source>
        <dbReference type="UniProtKB" id="Q53T94"/>
    </source>
</evidence>
<evidence type="ECO:0000269" key="3">
    <source>
    </source>
</evidence>
<evidence type="ECO:0000269" key="4">
    <source>
    </source>
</evidence>
<evidence type="ECO:0000269" key="5">
    <source>
    </source>
</evidence>
<evidence type="ECO:0000303" key="6">
    <source>
    </source>
</evidence>
<evidence type="ECO:0000305" key="7"/>
<organism>
    <name type="scientific">Mus musculus</name>
    <name type="common">Mouse</name>
    <dbReference type="NCBI Taxonomy" id="10090"/>
    <lineage>
        <taxon>Eukaryota</taxon>
        <taxon>Metazoa</taxon>
        <taxon>Chordata</taxon>
        <taxon>Craniata</taxon>
        <taxon>Vertebrata</taxon>
        <taxon>Euteleostomi</taxon>
        <taxon>Mammalia</taxon>
        <taxon>Eutheria</taxon>
        <taxon>Euarchontoglires</taxon>
        <taxon>Glires</taxon>
        <taxon>Rodentia</taxon>
        <taxon>Myomorpha</taxon>
        <taxon>Muroidea</taxon>
        <taxon>Muridae</taxon>
        <taxon>Murinae</taxon>
        <taxon>Mus</taxon>
        <taxon>Mus</taxon>
    </lineage>
</organism>
<accession>P97358</accession>
<accession>E9QJY7</accession>
<accession>Q08AT7</accession>
<accession>Q3V292</accession>
<accession>Q6NSS9</accession>